<sequence length="240" mass="25833">MSELSYRRILLKLSGEALMGDGDYGIDPKVINRLAHEVIEAQQAGAQVALVIGGGNIFRGAGLAASGMDRVTGDHMGMLATVINALAMQDALEKLGAKVRVMSAIKINDVCEDFIRRRAIRHLEKGRIAIFAAGTGNPFFTTDSGAALRAIEIGADLLLKATKVDGVYDKDPKKHTDAVRYDSLTYDRVILQGLEVMDTAAFALARDSDLPLRIFGMSEPGVLLRILHGEQIGTLVQGRS</sequence>
<feature type="chain" id="PRO_0000143907" description="Uridylate kinase">
    <location>
        <begin position="1"/>
        <end position="240"/>
    </location>
</feature>
<feature type="binding site" evidence="1">
    <location>
        <begin position="12"/>
        <end position="15"/>
    </location>
    <ligand>
        <name>ATP</name>
        <dbReference type="ChEBI" id="CHEBI:30616"/>
    </ligand>
</feature>
<feature type="binding site" evidence="1">
    <location>
        <position position="54"/>
    </location>
    <ligand>
        <name>UMP</name>
        <dbReference type="ChEBI" id="CHEBI:57865"/>
    </ligand>
</feature>
<feature type="binding site" evidence="1">
    <location>
        <position position="55"/>
    </location>
    <ligand>
        <name>ATP</name>
        <dbReference type="ChEBI" id="CHEBI:30616"/>
    </ligand>
</feature>
<feature type="binding site" evidence="1">
    <location>
        <position position="59"/>
    </location>
    <ligand>
        <name>ATP</name>
        <dbReference type="ChEBI" id="CHEBI:30616"/>
    </ligand>
</feature>
<feature type="binding site" evidence="1">
    <location>
        <position position="74"/>
    </location>
    <ligand>
        <name>UMP</name>
        <dbReference type="ChEBI" id="CHEBI:57865"/>
    </ligand>
</feature>
<feature type="binding site" evidence="1">
    <location>
        <begin position="135"/>
        <end position="142"/>
    </location>
    <ligand>
        <name>UMP</name>
        <dbReference type="ChEBI" id="CHEBI:57865"/>
    </ligand>
</feature>
<feature type="binding site" evidence="1">
    <location>
        <position position="162"/>
    </location>
    <ligand>
        <name>ATP</name>
        <dbReference type="ChEBI" id="CHEBI:30616"/>
    </ligand>
</feature>
<feature type="binding site" evidence="1">
    <location>
        <position position="168"/>
    </location>
    <ligand>
        <name>ATP</name>
        <dbReference type="ChEBI" id="CHEBI:30616"/>
    </ligand>
</feature>
<feature type="binding site" evidence="1">
    <location>
        <position position="171"/>
    </location>
    <ligand>
        <name>ATP</name>
        <dbReference type="ChEBI" id="CHEBI:30616"/>
    </ligand>
</feature>
<dbReference type="EC" id="2.7.4.22" evidence="1"/>
<dbReference type="EMBL" id="AE008923">
    <property type="protein sequence ID" value="AAM36290.1"/>
    <property type="molecule type" value="Genomic_DNA"/>
</dbReference>
<dbReference type="RefSeq" id="WP_011050901.1">
    <property type="nucleotide sequence ID" value="NC_003919.1"/>
</dbReference>
<dbReference type="SMR" id="P59008"/>
<dbReference type="GeneID" id="66910586"/>
<dbReference type="KEGG" id="xac:XAC1419"/>
<dbReference type="eggNOG" id="COG0528">
    <property type="taxonomic scope" value="Bacteria"/>
</dbReference>
<dbReference type="HOGENOM" id="CLU_033861_0_0_6"/>
<dbReference type="UniPathway" id="UPA00159">
    <property type="reaction ID" value="UER00275"/>
</dbReference>
<dbReference type="Proteomes" id="UP000000576">
    <property type="component" value="Chromosome"/>
</dbReference>
<dbReference type="GO" id="GO:0005829">
    <property type="term" value="C:cytosol"/>
    <property type="evidence" value="ECO:0007669"/>
    <property type="project" value="TreeGrafter"/>
</dbReference>
<dbReference type="GO" id="GO:0005524">
    <property type="term" value="F:ATP binding"/>
    <property type="evidence" value="ECO:0007669"/>
    <property type="project" value="UniProtKB-KW"/>
</dbReference>
<dbReference type="GO" id="GO:0033862">
    <property type="term" value="F:UMP kinase activity"/>
    <property type="evidence" value="ECO:0007669"/>
    <property type="project" value="UniProtKB-EC"/>
</dbReference>
<dbReference type="GO" id="GO:0044210">
    <property type="term" value="P:'de novo' CTP biosynthetic process"/>
    <property type="evidence" value="ECO:0007669"/>
    <property type="project" value="UniProtKB-UniRule"/>
</dbReference>
<dbReference type="GO" id="GO:0006225">
    <property type="term" value="P:UDP biosynthetic process"/>
    <property type="evidence" value="ECO:0007669"/>
    <property type="project" value="TreeGrafter"/>
</dbReference>
<dbReference type="CDD" id="cd04254">
    <property type="entry name" value="AAK_UMPK-PyrH-Ec"/>
    <property type="match status" value="1"/>
</dbReference>
<dbReference type="FunFam" id="3.40.1160.10:FF:000001">
    <property type="entry name" value="Uridylate kinase"/>
    <property type="match status" value="1"/>
</dbReference>
<dbReference type="Gene3D" id="3.40.1160.10">
    <property type="entry name" value="Acetylglutamate kinase-like"/>
    <property type="match status" value="1"/>
</dbReference>
<dbReference type="HAMAP" id="MF_01220_B">
    <property type="entry name" value="PyrH_B"/>
    <property type="match status" value="1"/>
</dbReference>
<dbReference type="InterPro" id="IPR036393">
    <property type="entry name" value="AceGlu_kinase-like_sf"/>
</dbReference>
<dbReference type="InterPro" id="IPR001048">
    <property type="entry name" value="Asp/Glu/Uridylate_kinase"/>
</dbReference>
<dbReference type="InterPro" id="IPR011817">
    <property type="entry name" value="Uridylate_kinase"/>
</dbReference>
<dbReference type="InterPro" id="IPR015963">
    <property type="entry name" value="Uridylate_kinase_bac"/>
</dbReference>
<dbReference type="NCBIfam" id="TIGR02075">
    <property type="entry name" value="pyrH_bact"/>
    <property type="match status" value="1"/>
</dbReference>
<dbReference type="PANTHER" id="PTHR42833">
    <property type="entry name" value="URIDYLATE KINASE"/>
    <property type="match status" value="1"/>
</dbReference>
<dbReference type="PANTHER" id="PTHR42833:SF4">
    <property type="entry name" value="URIDYLATE KINASE PUMPKIN, CHLOROPLASTIC"/>
    <property type="match status" value="1"/>
</dbReference>
<dbReference type="Pfam" id="PF00696">
    <property type="entry name" value="AA_kinase"/>
    <property type="match status" value="1"/>
</dbReference>
<dbReference type="PIRSF" id="PIRSF005650">
    <property type="entry name" value="Uridylate_kin"/>
    <property type="match status" value="1"/>
</dbReference>
<dbReference type="SUPFAM" id="SSF53633">
    <property type="entry name" value="Carbamate kinase-like"/>
    <property type="match status" value="1"/>
</dbReference>
<comment type="function">
    <text evidence="1">Catalyzes the reversible phosphorylation of UMP to UDP.</text>
</comment>
<comment type="catalytic activity">
    <reaction evidence="1">
        <text>UMP + ATP = UDP + ADP</text>
        <dbReference type="Rhea" id="RHEA:24400"/>
        <dbReference type="ChEBI" id="CHEBI:30616"/>
        <dbReference type="ChEBI" id="CHEBI:57865"/>
        <dbReference type="ChEBI" id="CHEBI:58223"/>
        <dbReference type="ChEBI" id="CHEBI:456216"/>
        <dbReference type="EC" id="2.7.4.22"/>
    </reaction>
</comment>
<comment type="activity regulation">
    <text evidence="1">Inhibited by UTP.</text>
</comment>
<comment type="pathway">
    <text evidence="1">Pyrimidine metabolism; CTP biosynthesis via de novo pathway; UDP from UMP (UMPK route): step 1/1.</text>
</comment>
<comment type="subunit">
    <text evidence="1">Homohexamer.</text>
</comment>
<comment type="subcellular location">
    <subcellularLocation>
        <location evidence="1">Cytoplasm</location>
    </subcellularLocation>
</comment>
<comment type="similarity">
    <text evidence="1">Belongs to the UMP kinase family.</text>
</comment>
<accession>P59008</accession>
<organism>
    <name type="scientific">Xanthomonas axonopodis pv. citri (strain 306)</name>
    <dbReference type="NCBI Taxonomy" id="190486"/>
    <lineage>
        <taxon>Bacteria</taxon>
        <taxon>Pseudomonadati</taxon>
        <taxon>Pseudomonadota</taxon>
        <taxon>Gammaproteobacteria</taxon>
        <taxon>Lysobacterales</taxon>
        <taxon>Lysobacteraceae</taxon>
        <taxon>Xanthomonas</taxon>
    </lineage>
</organism>
<protein>
    <recommendedName>
        <fullName evidence="1">Uridylate kinase</fullName>
        <shortName evidence="1">UK</shortName>
        <ecNumber evidence="1">2.7.4.22</ecNumber>
    </recommendedName>
    <alternativeName>
        <fullName evidence="1">Uridine monophosphate kinase</fullName>
        <shortName evidence="1">UMP kinase</shortName>
        <shortName evidence="1">UMPK</shortName>
    </alternativeName>
</protein>
<proteinExistence type="inferred from homology"/>
<gene>
    <name evidence="1" type="primary">pyrH</name>
    <name type="ordered locus">XAC1419</name>
</gene>
<name>PYRH_XANAC</name>
<reference key="1">
    <citation type="journal article" date="2002" name="Nature">
        <title>Comparison of the genomes of two Xanthomonas pathogens with differing host specificities.</title>
        <authorList>
            <person name="da Silva A.C.R."/>
            <person name="Ferro J.A."/>
            <person name="Reinach F.C."/>
            <person name="Farah C.S."/>
            <person name="Furlan L.R."/>
            <person name="Quaggio R.B."/>
            <person name="Monteiro-Vitorello C.B."/>
            <person name="Van Sluys M.A."/>
            <person name="Almeida N.F. Jr."/>
            <person name="Alves L.M.C."/>
            <person name="do Amaral A.M."/>
            <person name="Bertolini M.C."/>
            <person name="Camargo L.E.A."/>
            <person name="Camarotte G."/>
            <person name="Cannavan F."/>
            <person name="Cardozo J."/>
            <person name="Chambergo F."/>
            <person name="Ciapina L.P."/>
            <person name="Cicarelli R.M.B."/>
            <person name="Coutinho L.L."/>
            <person name="Cursino-Santos J.R."/>
            <person name="El-Dorry H."/>
            <person name="Faria J.B."/>
            <person name="Ferreira A.J.S."/>
            <person name="Ferreira R.C.C."/>
            <person name="Ferro M.I.T."/>
            <person name="Formighieri E.F."/>
            <person name="Franco M.C."/>
            <person name="Greggio C.C."/>
            <person name="Gruber A."/>
            <person name="Katsuyama A.M."/>
            <person name="Kishi L.T."/>
            <person name="Leite R.P."/>
            <person name="Lemos E.G.M."/>
            <person name="Lemos M.V.F."/>
            <person name="Locali E.C."/>
            <person name="Machado M.A."/>
            <person name="Madeira A.M.B.N."/>
            <person name="Martinez-Rossi N.M."/>
            <person name="Martins E.C."/>
            <person name="Meidanis J."/>
            <person name="Menck C.F.M."/>
            <person name="Miyaki C.Y."/>
            <person name="Moon D.H."/>
            <person name="Moreira L.M."/>
            <person name="Novo M.T.M."/>
            <person name="Okura V.K."/>
            <person name="Oliveira M.C."/>
            <person name="Oliveira V.R."/>
            <person name="Pereira H.A."/>
            <person name="Rossi A."/>
            <person name="Sena J.A.D."/>
            <person name="Silva C."/>
            <person name="de Souza R.F."/>
            <person name="Spinola L.A.F."/>
            <person name="Takita M.A."/>
            <person name="Tamura R.E."/>
            <person name="Teixeira E.C."/>
            <person name="Tezza R.I.D."/>
            <person name="Trindade dos Santos M."/>
            <person name="Truffi D."/>
            <person name="Tsai S.M."/>
            <person name="White F.F."/>
            <person name="Setubal J.C."/>
            <person name="Kitajima J.P."/>
        </authorList>
    </citation>
    <scope>NUCLEOTIDE SEQUENCE [LARGE SCALE GENOMIC DNA]</scope>
    <source>
        <strain>306</strain>
    </source>
</reference>
<evidence type="ECO:0000255" key="1">
    <source>
        <dbReference type="HAMAP-Rule" id="MF_01220"/>
    </source>
</evidence>
<keyword id="KW-0067">ATP-binding</keyword>
<keyword id="KW-0963">Cytoplasm</keyword>
<keyword id="KW-0418">Kinase</keyword>
<keyword id="KW-0547">Nucleotide-binding</keyword>
<keyword id="KW-0665">Pyrimidine biosynthesis</keyword>
<keyword id="KW-0808">Transferase</keyword>